<feature type="chain" id="PRO_1000215642" description="tRNA U34 carboxymethyltransferase">
    <location>
        <begin position="1"/>
        <end position="323"/>
    </location>
</feature>
<feature type="binding site" evidence="1">
    <location>
        <position position="91"/>
    </location>
    <ligand>
        <name>carboxy-S-adenosyl-L-methionine</name>
        <dbReference type="ChEBI" id="CHEBI:134278"/>
    </ligand>
</feature>
<feature type="binding site" evidence="1">
    <location>
        <position position="105"/>
    </location>
    <ligand>
        <name>carboxy-S-adenosyl-L-methionine</name>
        <dbReference type="ChEBI" id="CHEBI:134278"/>
    </ligand>
</feature>
<feature type="binding site" evidence="1">
    <location>
        <position position="110"/>
    </location>
    <ligand>
        <name>carboxy-S-adenosyl-L-methionine</name>
        <dbReference type="ChEBI" id="CHEBI:134278"/>
    </ligand>
</feature>
<feature type="binding site" evidence="1">
    <location>
        <position position="130"/>
    </location>
    <ligand>
        <name>carboxy-S-adenosyl-L-methionine</name>
        <dbReference type="ChEBI" id="CHEBI:134278"/>
    </ligand>
</feature>
<feature type="binding site" evidence="1">
    <location>
        <begin position="181"/>
        <end position="182"/>
    </location>
    <ligand>
        <name>carboxy-S-adenosyl-L-methionine</name>
        <dbReference type="ChEBI" id="CHEBI:134278"/>
    </ligand>
</feature>
<feature type="binding site" evidence="1">
    <location>
        <position position="196"/>
    </location>
    <ligand>
        <name>carboxy-S-adenosyl-L-methionine</name>
        <dbReference type="ChEBI" id="CHEBI:134278"/>
    </ligand>
</feature>
<feature type="binding site" evidence="1">
    <location>
        <position position="200"/>
    </location>
    <ligand>
        <name>carboxy-S-adenosyl-L-methionine</name>
        <dbReference type="ChEBI" id="CHEBI:134278"/>
    </ligand>
</feature>
<feature type="binding site" evidence="1">
    <location>
        <position position="315"/>
    </location>
    <ligand>
        <name>carboxy-S-adenosyl-L-methionine</name>
        <dbReference type="ChEBI" id="CHEBI:134278"/>
    </ligand>
</feature>
<comment type="function">
    <text evidence="1">Catalyzes carboxymethyl transfer from carboxy-S-adenosyl-L-methionine (Cx-SAM) to 5-hydroxyuridine (ho5U) to form 5-carboxymethoxyuridine (cmo5U) at position 34 in tRNAs.</text>
</comment>
<comment type="catalytic activity">
    <reaction evidence="1">
        <text>carboxy-S-adenosyl-L-methionine + 5-hydroxyuridine(34) in tRNA = 5-carboxymethoxyuridine(34) in tRNA + S-adenosyl-L-homocysteine + H(+)</text>
        <dbReference type="Rhea" id="RHEA:52848"/>
        <dbReference type="Rhea" id="RHEA-COMP:13381"/>
        <dbReference type="Rhea" id="RHEA-COMP:13383"/>
        <dbReference type="ChEBI" id="CHEBI:15378"/>
        <dbReference type="ChEBI" id="CHEBI:57856"/>
        <dbReference type="ChEBI" id="CHEBI:134278"/>
        <dbReference type="ChEBI" id="CHEBI:136877"/>
        <dbReference type="ChEBI" id="CHEBI:136879"/>
    </reaction>
</comment>
<comment type="subunit">
    <text evidence="1">Homotetramer.</text>
</comment>
<comment type="similarity">
    <text evidence="1">Belongs to the class I-like SAM-binding methyltransferase superfamily. CmoB family.</text>
</comment>
<reference key="1">
    <citation type="submission" date="2009-03" db="EMBL/GenBank/DDBJ databases">
        <title>Complete genome sequence of Edwardsiella ictaluri 93-146.</title>
        <authorList>
            <person name="Williams M.L."/>
            <person name="Gillaspy A.F."/>
            <person name="Dyer D.W."/>
            <person name="Thune R.L."/>
            <person name="Waldbieser G.C."/>
            <person name="Schuster S.C."/>
            <person name="Gipson J."/>
            <person name="Zaitshik J."/>
            <person name="Landry C."/>
            <person name="Lawrence M.L."/>
        </authorList>
    </citation>
    <scope>NUCLEOTIDE SEQUENCE [LARGE SCALE GENOMIC DNA]</scope>
    <source>
        <strain>93-146</strain>
    </source>
</reference>
<proteinExistence type="inferred from homology"/>
<sequence length="323" mass="36569">MIDFGNFYAQIAHGPLSKWLEVLPAQLAAWQRDSLHGYFRDWNNAVERLPALTPHRLDLLHGVCAGAETPLSEGQRIGIEKMLRTLMPWRKGPFELYGIQIDTEWRSDWKWQRILPHLSPLAGRTILDVGCGSGYHLWRMVGAGAHLAVGIDPMQLFLCQFEAVRKLLGGDSRAHLLPLGIEQLPALAAFDTVFSMGVLYHRRSPLDHLYQLKNQLVSGGELLLETLVIEGDEQQALIPGERYAQMRNVYFIPSAAMLIRWLEKCGFCDVRLVDQCPTSVEEQRRTDWMTSESLADFLDPADVRKTLEGYPAPLRAAFIARKP</sequence>
<protein>
    <recommendedName>
        <fullName evidence="1">tRNA U34 carboxymethyltransferase</fullName>
        <ecNumber evidence="1">2.5.1.-</ecNumber>
    </recommendedName>
</protein>
<keyword id="KW-0808">Transferase</keyword>
<keyword id="KW-0819">tRNA processing</keyword>
<evidence type="ECO:0000255" key="1">
    <source>
        <dbReference type="HAMAP-Rule" id="MF_01590"/>
    </source>
</evidence>
<accession>C5B836</accession>
<name>CMOB_EDWI9</name>
<organism>
    <name type="scientific">Edwardsiella ictaluri (strain 93-146)</name>
    <dbReference type="NCBI Taxonomy" id="634503"/>
    <lineage>
        <taxon>Bacteria</taxon>
        <taxon>Pseudomonadati</taxon>
        <taxon>Pseudomonadota</taxon>
        <taxon>Gammaproteobacteria</taxon>
        <taxon>Enterobacterales</taxon>
        <taxon>Hafniaceae</taxon>
        <taxon>Edwardsiella</taxon>
    </lineage>
</organism>
<dbReference type="EC" id="2.5.1.-" evidence="1"/>
<dbReference type="EMBL" id="CP001600">
    <property type="protein sequence ID" value="ACR68772.1"/>
    <property type="molecule type" value="Genomic_DNA"/>
</dbReference>
<dbReference type="RefSeq" id="WP_015870930.1">
    <property type="nucleotide sequence ID" value="NZ_CP169062.1"/>
</dbReference>
<dbReference type="SMR" id="C5B836"/>
<dbReference type="STRING" id="67780.B6E78_01130"/>
<dbReference type="GeneID" id="69538565"/>
<dbReference type="KEGG" id="eic:NT01EI_1588"/>
<dbReference type="PATRIC" id="fig|634503.3.peg.1420"/>
<dbReference type="HOGENOM" id="CLU_052665_0_0_6"/>
<dbReference type="OrthoDB" id="9773188at2"/>
<dbReference type="Proteomes" id="UP000001485">
    <property type="component" value="Chromosome"/>
</dbReference>
<dbReference type="GO" id="GO:0008168">
    <property type="term" value="F:methyltransferase activity"/>
    <property type="evidence" value="ECO:0007669"/>
    <property type="project" value="TreeGrafter"/>
</dbReference>
<dbReference type="GO" id="GO:0016765">
    <property type="term" value="F:transferase activity, transferring alkyl or aryl (other than methyl) groups"/>
    <property type="evidence" value="ECO:0007669"/>
    <property type="project" value="UniProtKB-UniRule"/>
</dbReference>
<dbReference type="GO" id="GO:0002098">
    <property type="term" value="P:tRNA wobble uridine modification"/>
    <property type="evidence" value="ECO:0007669"/>
    <property type="project" value="InterPro"/>
</dbReference>
<dbReference type="CDD" id="cd02440">
    <property type="entry name" value="AdoMet_MTases"/>
    <property type="match status" value="1"/>
</dbReference>
<dbReference type="Gene3D" id="3.40.50.150">
    <property type="entry name" value="Vaccinia Virus protein VP39"/>
    <property type="match status" value="1"/>
</dbReference>
<dbReference type="HAMAP" id="MF_01590">
    <property type="entry name" value="tRNA_carboxymethyltr_CmoB"/>
    <property type="match status" value="1"/>
</dbReference>
<dbReference type="InterPro" id="IPR010017">
    <property type="entry name" value="CmoB"/>
</dbReference>
<dbReference type="InterPro" id="IPR027555">
    <property type="entry name" value="Mo5U34_MeTrfas-like"/>
</dbReference>
<dbReference type="InterPro" id="IPR029063">
    <property type="entry name" value="SAM-dependent_MTases_sf"/>
</dbReference>
<dbReference type="NCBIfam" id="NF011650">
    <property type="entry name" value="PRK15068.1"/>
    <property type="match status" value="1"/>
</dbReference>
<dbReference type="NCBIfam" id="TIGR00452">
    <property type="entry name" value="tRNA 5-methoxyuridine(34)/uridine 5-oxyacetic acid(34) synthase CmoB"/>
    <property type="match status" value="1"/>
</dbReference>
<dbReference type="PANTHER" id="PTHR43464">
    <property type="entry name" value="METHYLTRANSFERASE"/>
    <property type="match status" value="1"/>
</dbReference>
<dbReference type="PANTHER" id="PTHR43464:SF95">
    <property type="entry name" value="TRNA U34 CARBOXYMETHYLTRANSFERASE"/>
    <property type="match status" value="1"/>
</dbReference>
<dbReference type="Pfam" id="PF08003">
    <property type="entry name" value="Methyltransf_9"/>
    <property type="match status" value="1"/>
</dbReference>
<dbReference type="SUPFAM" id="SSF53335">
    <property type="entry name" value="S-adenosyl-L-methionine-dependent methyltransferases"/>
    <property type="match status" value="1"/>
</dbReference>
<gene>
    <name evidence="1" type="primary">cmoB</name>
    <name type="ordered locus">NT01EI_1588</name>
</gene>